<protein>
    <recommendedName>
        <fullName evidence="1">Phosphoribosyl-AMP cyclohydrolase</fullName>
        <shortName evidence="1">PRA-CH</shortName>
        <ecNumber evidence="1">3.5.4.19</ecNumber>
    </recommendedName>
</protein>
<organism>
    <name type="scientific">Clostridium botulinum (strain ATCC 19397 / Type A)</name>
    <dbReference type="NCBI Taxonomy" id="441770"/>
    <lineage>
        <taxon>Bacteria</taxon>
        <taxon>Bacillati</taxon>
        <taxon>Bacillota</taxon>
        <taxon>Clostridia</taxon>
        <taxon>Eubacteriales</taxon>
        <taxon>Clostridiaceae</taxon>
        <taxon>Clostridium</taxon>
    </lineage>
</organism>
<feature type="chain" id="PRO_1000063401" description="Phosphoribosyl-AMP cyclohydrolase">
    <location>
        <begin position="1"/>
        <end position="110"/>
    </location>
</feature>
<feature type="binding site" evidence="1">
    <location>
        <position position="80"/>
    </location>
    <ligand>
        <name>Mg(2+)</name>
        <dbReference type="ChEBI" id="CHEBI:18420"/>
    </ligand>
</feature>
<feature type="binding site" evidence="1">
    <location>
        <position position="81"/>
    </location>
    <ligand>
        <name>Zn(2+)</name>
        <dbReference type="ChEBI" id="CHEBI:29105"/>
        <note>ligand shared between dimeric partners</note>
    </ligand>
</feature>
<feature type="binding site" evidence="1">
    <location>
        <position position="82"/>
    </location>
    <ligand>
        <name>Mg(2+)</name>
        <dbReference type="ChEBI" id="CHEBI:18420"/>
    </ligand>
</feature>
<feature type="binding site" evidence="1">
    <location>
        <position position="84"/>
    </location>
    <ligand>
        <name>Mg(2+)</name>
        <dbReference type="ChEBI" id="CHEBI:18420"/>
    </ligand>
</feature>
<feature type="binding site" evidence="1">
    <location>
        <position position="97"/>
    </location>
    <ligand>
        <name>Zn(2+)</name>
        <dbReference type="ChEBI" id="CHEBI:29105"/>
        <note>ligand shared between dimeric partners</note>
    </ligand>
</feature>
<feature type="binding site" evidence="1">
    <location>
        <position position="104"/>
    </location>
    <ligand>
        <name>Zn(2+)</name>
        <dbReference type="ChEBI" id="CHEBI:29105"/>
        <note>ligand shared between dimeric partners</note>
    </ligand>
</feature>
<accession>A7FU83</accession>
<evidence type="ECO:0000255" key="1">
    <source>
        <dbReference type="HAMAP-Rule" id="MF_01021"/>
    </source>
</evidence>
<reference key="1">
    <citation type="journal article" date="2007" name="PLoS ONE">
        <title>Analysis of the neurotoxin complex genes in Clostridium botulinum A1-A4 and B1 strains: BoNT/A3, /Ba4 and /B1 clusters are located within plasmids.</title>
        <authorList>
            <person name="Smith T.J."/>
            <person name="Hill K.K."/>
            <person name="Foley B.T."/>
            <person name="Detter J.C."/>
            <person name="Munk A.C."/>
            <person name="Bruce D.C."/>
            <person name="Doggett N.A."/>
            <person name="Smith L.A."/>
            <person name="Marks J.D."/>
            <person name="Xie G."/>
            <person name="Brettin T.S."/>
        </authorList>
    </citation>
    <scope>NUCLEOTIDE SEQUENCE [LARGE SCALE GENOMIC DNA]</scope>
    <source>
        <strain>ATCC 19397 / Type A</strain>
    </source>
</reference>
<keyword id="KW-0028">Amino-acid biosynthesis</keyword>
<keyword id="KW-0963">Cytoplasm</keyword>
<keyword id="KW-0368">Histidine biosynthesis</keyword>
<keyword id="KW-0378">Hydrolase</keyword>
<keyword id="KW-0460">Magnesium</keyword>
<keyword id="KW-0479">Metal-binding</keyword>
<keyword id="KW-0862">Zinc</keyword>
<gene>
    <name evidence="1" type="primary">hisI</name>
    <name type="ordered locus">CLB_1593</name>
</gene>
<dbReference type="EC" id="3.5.4.19" evidence="1"/>
<dbReference type="EMBL" id="CP000726">
    <property type="protein sequence ID" value="ABS32752.1"/>
    <property type="molecule type" value="Genomic_DNA"/>
</dbReference>
<dbReference type="RefSeq" id="WP_003397763.1">
    <property type="nucleotide sequence ID" value="NC_009697.1"/>
</dbReference>
<dbReference type="SMR" id="A7FU83"/>
<dbReference type="GeneID" id="5185828"/>
<dbReference type="KEGG" id="cba:CLB_1593"/>
<dbReference type="HOGENOM" id="CLU_048577_5_3_9"/>
<dbReference type="UniPathway" id="UPA00031">
    <property type="reaction ID" value="UER00008"/>
</dbReference>
<dbReference type="GO" id="GO:0005737">
    <property type="term" value="C:cytoplasm"/>
    <property type="evidence" value="ECO:0007669"/>
    <property type="project" value="UniProtKB-SubCell"/>
</dbReference>
<dbReference type="GO" id="GO:0000287">
    <property type="term" value="F:magnesium ion binding"/>
    <property type="evidence" value="ECO:0007669"/>
    <property type="project" value="UniProtKB-UniRule"/>
</dbReference>
<dbReference type="GO" id="GO:0004635">
    <property type="term" value="F:phosphoribosyl-AMP cyclohydrolase activity"/>
    <property type="evidence" value="ECO:0007669"/>
    <property type="project" value="UniProtKB-UniRule"/>
</dbReference>
<dbReference type="GO" id="GO:0008270">
    <property type="term" value="F:zinc ion binding"/>
    <property type="evidence" value="ECO:0007669"/>
    <property type="project" value="UniProtKB-UniRule"/>
</dbReference>
<dbReference type="GO" id="GO:0000105">
    <property type="term" value="P:L-histidine biosynthetic process"/>
    <property type="evidence" value="ECO:0007669"/>
    <property type="project" value="UniProtKB-UniRule"/>
</dbReference>
<dbReference type="FunFam" id="3.10.20.810:FF:000001">
    <property type="entry name" value="Histidine biosynthesis bifunctional protein HisIE"/>
    <property type="match status" value="1"/>
</dbReference>
<dbReference type="Gene3D" id="3.10.20.810">
    <property type="entry name" value="Phosphoribosyl-AMP cyclohydrolase"/>
    <property type="match status" value="1"/>
</dbReference>
<dbReference type="HAMAP" id="MF_01021">
    <property type="entry name" value="HisI"/>
    <property type="match status" value="1"/>
</dbReference>
<dbReference type="InterPro" id="IPR026660">
    <property type="entry name" value="PRA-CH"/>
</dbReference>
<dbReference type="InterPro" id="IPR002496">
    <property type="entry name" value="PRib_AMP_CycHydrolase_dom"/>
</dbReference>
<dbReference type="InterPro" id="IPR038019">
    <property type="entry name" value="PRib_AMP_CycHydrolase_sf"/>
</dbReference>
<dbReference type="NCBIfam" id="NF000768">
    <property type="entry name" value="PRK00051.1"/>
    <property type="match status" value="1"/>
</dbReference>
<dbReference type="PANTHER" id="PTHR42945">
    <property type="entry name" value="HISTIDINE BIOSYNTHESIS BIFUNCTIONAL PROTEIN"/>
    <property type="match status" value="1"/>
</dbReference>
<dbReference type="PANTHER" id="PTHR42945:SF1">
    <property type="entry name" value="HISTIDINE BIOSYNTHESIS BIFUNCTIONAL PROTEIN HIS7"/>
    <property type="match status" value="1"/>
</dbReference>
<dbReference type="Pfam" id="PF01502">
    <property type="entry name" value="PRA-CH"/>
    <property type="match status" value="1"/>
</dbReference>
<dbReference type="SUPFAM" id="SSF141734">
    <property type="entry name" value="HisI-like"/>
    <property type="match status" value="1"/>
</dbReference>
<name>HIS3_CLOB1</name>
<proteinExistence type="inferred from homology"/>
<comment type="function">
    <text evidence="1">Catalyzes the hydrolysis of the adenine ring of phosphoribosyl-AMP.</text>
</comment>
<comment type="catalytic activity">
    <reaction evidence="1">
        <text>1-(5-phospho-beta-D-ribosyl)-5'-AMP + H2O = 1-(5-phospho-beta-D-ribosyl)-5-[(5-phospho-beta-D-ribosylamino)methylideneamino]imidazole-4-carboxamide</text>
        <dbReference type="Rhea" id="RHEA:20049"/>
        <dbReference type="ChEBI" id="CHEBI:15377"/>
        <dbReference type="ChEBI" id="CHEBI:58435"/>
        <dbReference type="ChEBI" id="CHEBI:59457"/>
        <dbReference type="EC" id="3.5.4.19"/>
    </reaction>
</comment>
<comment type="cofactor">
    <cofactor evidence="1">
        <name>Mg(2+)</name>
        <dbReference type="ChEBI" id="CHEBI:18420"/>
    </cofactor>
    <text evidence="1">Binds 1 Mg(2+) ion per subunit.</text>
</comment>
<comment type="cofactor">
    <cofactor evidence="1">
        <name>Zn(2+)</name>
        <dbReference type="ChEBI" id="CHEBI:29105"/>
    </cofactor>
    <text evidence="1">Binds 1 zinc ion per subunit.</text>
</comment>
<comment type="pathway">
    <text evidence="1">Amino-acid biosynthesis; L-histidine biosynthesis; L-histidine from 5-phospho-alpha-D-ribose 1-diphosphate: step 3/9.</text>
</comment>
<comment type="subunit">
    <text evidence="1">Homodimer.</text>
</comment>
<comment type="subcellular location">
    <subcellularLocation>
        <location evidence="1">Cytoplasm</location>
    </subcellularLocation>
</comment>
<comment type="similarity">
    <text evidence="1">Belongs to the PRA-CH family.</text>
</comment>
<sequence>MNLQKISKKIDFKKGAGLIPTIIQDFCSGEVLMLAYMNKESLEKTIETNTTWFWSRSREELWNKGATSGHFQYVKSIHIDCDGDTLLIKVEQLGPACHTGNRSCFYTTLI</sequence>